<evidence type="ECO:0000255" key="1">
    <source>
        <dbReference type="HAMAP-Rule" id="MF_00366"/>
    </source>
</evidence>
<evidence type="ECO:0000305" key="2"/>
<comment type="function">
    <text evidence="1">Promotes RNA polymerase assembly. Latches the N- and C-terminal regions of the beta' subunit thereby facilitating its interaction with the beta and alpha subunits.</text>
</comment>
<comment type="catalytic activity">
    <reaction evidence="1">
        <text>RNA(n) + a ribonucleoside 5'-triphosphate = RNA(n+1) + diphosphate</text>
        <dbReference type="Rhea" id="RHEA:21248"/>
        <dbReference type="Rhea" id="RHEA-COMP:14527"/>
        <dbReference type="Rhea" id="RHEA-COMP:17342"/>
        <dbReference type="ChEBI" id="CHEBI:33019"/>
        <dbReference type="ChEBI" id="CHEBI:61557"/>
        <dbReference type="ChEBI" id="CHEBI:140395"/>
        <dbReference type="EC" id="2.7.7.6"/>
    </reaction>
</comment>
<comment type="subunit">
    <text evidence="1">The RNAP catalytic core consists of 2 alpha, 1 beta, 1 beta' and 1 omega subunit. When a sigma factor is associated with the core the holoenzyme is formed, which can initiate transcription.</text>
</comment>
<comment type="similarity">
    <text evidence="1">Belongs to the RNA polymerase subunit omega family.</text>
</comment>
<comment type="sequence caution" evidence="2">
    <conflict type="erroneous initiation">
        <sequence resource="EMBL-CDS" id="ABD12551"/>
    </conflict>
</comment>
<feature type="chain" id="PRO_0000237460" description="DNA-directed RNA polymerase subunit omega">
    <location>
        <begin position="1"/>
        <end position="94"/>
    </location>
</feature>
<dbReference type="EC" id="2.7.7.6" evidence="1"/>
<dbReference type="EMBL" id="CP000249">
    <property type="protein sequence ID" value="ABD12551.1"/>
    <property type="status" value="ALT_INIT"/>
    <property type="molecule type" value="Genomic_DNA"/>
</dbReference>
<dbReference type="RefSeq" id="WP_023841498.1">
    <property type="nucleotide sequence ID" value="NZ_LRTJ01000064.1"/>
</dbReference>
<dbReference type="SMR" id="Q2J841"/>
<dbReference type="STRING" id="106370.Francci3_3194"/>
<dbReference type="KEGG" id="fra:Francci3_3194"/>
<dbReference type="eggNOG" id="COG1758">
    <property type="taxonomic scope" value="Bacteria"/>
</dbReference>
<dbReference type="HOGENOM" id="CLU_1728702_0_0_11"/>
<dbReference type="OrthoDB" id="8481372at2"/>
<dbReference type="PhylomeDB" id="Q2J841"/>
<dbReference type="Proteomes" id="UP000001937">
    <property type="component" value="Chromosome"/>
</dbReference>
<dbReference type="GO" id="GO:0000428">
    <property type="term" value="C:DNA-directed RNA polymerase complex"/>
    <property type="evidence" value="ECO:0007669"/>
    <property type="project" value="UniProtKB-KW"/>
</dbReference>
<dbReference type="GO" id="GO:0003677">
    <property type="term" value="F:DNA binding"/>
    <property type="evidence" value="ECO:0007669"/>
    <property type="project" value="UniProtKB-UniRule"/>
</dbReference>
<dbReference type="GO" id="GO:0003899">
    <property type="term" value="F:DNA-directed RNA polymerase activity"/>
    <property type="evidence" value="ECO:0007669"/>
    <property type="project" value="UniProtKB-UniRule"/>
</dbReference>
<dbReference type="GO" id="GO:0006351">
    <property type="term" value="P:DNA-templated transcription"/>
    <property type="evidence" value="ECO:0007669"/>
    <property type="project" value="UniProtKB-UniRule"/>
</dbReference>
<dbReference type="Gene3D" id="3.90.940.10">
    <property type="match status" value="1"/>
</dbReference>
<dbReference type="HAMAP" id="MF_00366">
    <property type="entry name" value="RNApol_bact_RpoZ"/>
    <property type="match status" value="1"/>
</dbReference>
<dbReference type="InterPro" id="IPR003716">
    <property type="entry name" value="DNA-dir_RNA_pol_omega"/>
</dbReference>
<dbReference type="InterPro" id="IPR006110">
    <property type="entry name" value="Pol_omega/Rpo6/RPB6"/>
</dbReference>
<dbReference type="InterPro" id="IPR036161">
    <property type="entry name" value="RPB6/omega-like_sf"/>
</dbReference>
<dbReference type="NCBIfam" id="TIGR00690">
    <property type="entry name" value="rpoZ"/>
    <property type="match status" value="1"/>
</dbReference>
<dbReference type="PANTHER" id="PTHR34476">
    <property type="entry name" value="DNA-DIRECTED RNA POLYMERASE SUBUNIT OMEGA"/>
    <property type="match status" value="1"/>
</dbReference>
<dbReference type="PANTHER" id="PTHR34476:SF1">
    <property type="entry name" value="DNA-DIRECTED RNA POLYMERASE SUBUNIT OMEGA"/>
    <property type="match status" value="1"/>
</dbReference>
<dbReference type="Pfam" id="PF01192">
    <property type="entry name" value="RNA_pol_Rpb6"/>
    <property type="match status" value="1"/>
</dbReference>
<dbReference type="SMART" id="SM01409">
    <property type="entry name" value="RNA_pol_Rpb6"/>
    <property type="match status" value="1"/>
</dbReference>
<dbReference type="SUPFAM" id="SSF63562">
    <property type="entry name" value="RPB6/omega subunit-like"/>
    <property type="match status" value="1"/>
</dbReference>
<proteinExistence type="inferred from homology"/>
<sequence>MAGTAAHPEGITNPPIDELLEATDSKYSLVIYAAKRARQINAYYSQLGEGLLEYVGPLVETTNAQEKPLSIALREINAGLLTHETVADSLPPVS</sequence>
<keyword id="KW-0240">DNA-directed RNA polymerase</keyword>
<keyword id="KW-0548">Nucleotidyltransferase</keyword>
<keyword id="KW-1185">Reference proteome</keyword>
<keyword id="KW-0804">Transcription</keyword>
<keyword id="KW-0808">Transferase</keyword>
<reference key="1">
    <citation type="journal article" date="2007" name="Genome Res.">
        <title>Genome characteristics of facultatively symbiotic Frankia sp. strains reflect host range and host plant biogeography.</title>
        <authorList>
            <person name="Normand P."/>
            <person name="Lapierre P."/>
            <person name="Tisa L.S."/>
            <person name="Gogarten J.P."/>
            <person name="Alloisio N."/>
            <person name="Bagnarol E."/>
            <person name="Bassi C.A."/>
            <person name="Berry A.M."/>
            <person name="Bickhart D.M."/>
            <person name="Choisne N."/>
            <person name="Couloux A."/>
            <person name="Cournoyer B."/>
            <person name="Cruveiller S."/>
            <person name="Daubin V."/>
            <person name="Demange N."/>
            <person name="Francino M.P."/>
            <person name="Goltsman E."/>
            <person name="Huang Y."/>
            <person name="Kopp O.R."/>
            <person name="Labarre L."/>
            <person name="Lapidus A."/>
            <person name="Lavire C."/>
            <person name="Marechal J."/>
            <person name="Martinez M."/>
            <person name="Mastronunzio J.E."/>
            <person name="Mullin B.C."/>
            <person name="Niemann J."/>
            <person name="Pujic P."/>
            <person name="Rawnsley T."/>
            <person name="Rouy Z."/>
            <person name="Schenowitz C."/>
            <person name="Sellstedt A."/>
            <person name="Tavares F."/>
            <person name="Tomkins J.P."/>
            <person name="Vallenet D."/>
            <person name="Valverde C."/>
            <person name="Wall L.G."/>
            <person name="Wang Y."/>
            <person name="Medigue C."/>
            <person name="Benson D.R."/>
        </authorList>
    </citation>
    <scope>NUCLEOTIDE SEQUENCE [LARGE SCALE GENOMIC DNA]</scope>
    <source>
        <strain>DSM 45818 / CECT 9043 / HFP020203 / CcI3</strain>
    </source>
</reference>
<name>RPOZ_FRACC</name>
<organism>
    <name type="scientific">Frankia casuarinae (strain DSM 45818 / CECT 9043 / HFP020203 / CcI3)</name>
    <dbReference type="NCBI Taxonomy" id="106370"/>
    <lineage>
        <taxon>Bacteria</taxon>
        <taxon>Bacillati</taxon>
        <taxon>Actinomycetota</taxon>
        <taxon>Actinomycetes</taxon>
        <taxon>Frankiales</taxon>
        <taxon>Frankiaceae</taxon>
        <taxon>Frankia</taxon>
    </lineage>
</organism>
<gene>
    <name evidence="1" type="primary">rpoZ</name>
    <name type="ordered locus">Francci3_3194</name>
</gene>
<protein>
    <recommendedName>
        <fullName evidence="1">DNA-directed RNA polymerase subunit omega</fullName>
        <shortName evidence="1">RNAP omega subunit</shortName>
        <ecNumber evidence="1">2.7.7.6</ecNumber>
    </recommendedName>
    <alternativeName>
        <fullName evidence="1">RNA polymerase omega subunit</fullName>
    </alternativeName>
    <alternativeName>
        <fullName evidence="1">Transcriptase subunit omega</fullName>
    </alternativeName>
</protein>
<accession>Q2J841</accession>